<name>RECX_LISMO</name>
<reference key="1">
    <citation type="journal article" date="2001" name="Science">
        <title>Comparative genomics of Listeria species.</title>
        <authorList>
            <person name="Glaser P."/>
            <person name="Frangeul L."/>
            <person name="Buchrieser C."/>
            <person name="Rusniok C."/>
            <person name="Amend A."/>
            <person name="Baquero F."/>
            <person name="Berche P."/>
            <person name="Bloecker H."/>
            <person name="Brandt P."/>
            <person name="Chakraborty T."/>
            <person name="Charbit A."/>
            <person name="Chetouani F."/>
            <person name="Couve E."/>
            <person name="de Daruvar A."/>
            <person name="Dehoux P."/>
            <person name="Domann E."/>
            <person name="Dominguez-Bernal G."/>
            <person name="Duchaud E."/>
            <person name="Durant L."/>
            <person name="Dussurget O."/>
            <person name="Entian K.-D."/>
            <person name="Fsihi H."/>
            <person name="Garcia-del Portillo F."/>
            <person name="Garrido P."/>
            <person name="Gautier L."/>
            <person name="Goebel W."/>
            <person name="Gomez-Lopez N."/>
            <person name="Hain T."/>
            <person name="Hauf J."/>
            <person name="Jackson D."/>
            <person name="Jones L.-M."/>
            <person name="Kaerst U."/>
            <person name="Kreft J."/>
            <person name="Kuhn M."/>
            <person name="Kunst F."/>
            <person name="Kurapkat G."/>
            <person name="Madueno E."/>
            <person name="Maitournam A."/>
            <person name="Mata Vicente J."/>
            <person name="Ng E."/>
            <person name="Nedjari H."/>
            <person name="Nordsiek G."/>
            <person name="Novella S."/>
            <person name="de Pablos B."/>
            <person name="Perez-Diaz J.-C."/>
            <person name="Purcell R."/>
            <person name="Remmel B."/>
            <person name="Rose M."/>
            <person name="Schlueter T."/>
            <person name="Simoes N."/>
            <person name="Tierrez A."/>
            <person name="Vazquez-Boland J.-A."/>
            <person name="Voss H."/>
            <person name="Wehland J."/>
            <person name="Cossart P."/>
        </authorList>
    </citation>
    <scope>NUCLEOTIDE SEQUENCE [LARGE SCALE GENOMIC DNA]</scope>
    <source>
        <strain>ATCC BAA-679 / EGD-e</strain>
    </source>
</reference>
<organism>
    <name type="scientific">Listeria monocytogenes serovar 1/2a (strain ATCC BAA-679 / EGD-e)</name>
    <dbReference type="NCBI Taxonomy" id="169963"/>
    <lineage>
        <taxon>Bacteria</taxon>
        <taxon>Bacillati</taxon>
        <taxon>Bacillota</taxon>
        <taxon>Bacilli</taxon>
        <taxon>Bacillales</taxon>
        <taxon>Listeriaceae</taxon>
        <taxon>Listeria</taxon>
    </lineage>
</organism>
<keyword id="KW-0963">Cytoplasm</keyword>
<keyword id="KW-1185">Reference proteome</keyword>
<feature type="chain" id="PRO_0000162446" description="Regulatory protein RecX">
    <location>
        <begin position="1"/>
        <end position="269"/>
    </location>
</feature>
<gene>
    <name type="primary">recX</name>
    <name type="ordered locus">lmo1693</name>
</gene>
<evidence type="ECO:0000250" key="1"/>
<evidence type="ECO:0000305" key="2"/>
<protein>
    <recommendedName>
        <fullName>Regulatory protein RecX</fullName>
    </recommendedName>
</protein>
<sequence>MKITSISVQQKNKERYNIFIDEKYNFSVDEEVLARYQLMKGKVLTEADIEEIKQADMVRKGLNKAINFLSHRVRSEKEIRDYLRKQEMEPFAIDEILKKLANMDYINDFEFAELYTKTQIKTTLKGPRTIERELVEKGLTREIISRVIEEYSDEAQLENATKQAMKIMKRNNKSAKKMLQQKIITDLIQKGFTSELAKAAATEATSELDVADEAEILQKQIEKTMRKNKRYKPSIAKQKTITSLMQKGFSYDTIQSYLTENEISFEEEE</sequence>
<accession>Q8Y6J1</accession>
<comment type="function">
    <text evidence="1">Modulates RecA activity.</text>
</comment>
<comment type="subcellular location">
    <subcellularLocation>
        <location evidence="2">Cytoplasm</location>
    </subcellularLocation>
</comment>
<comment type="similarity">
    <text evidence="2">Belongs to the RecX family.</text>
</comment>
<dbReference type="EMBL" id="AL591981">
    <property type="protein sequence ID" value="CAC99771.1"/>
    <property type="molecule type" value="Genomic_DNA"/>
</dbReference>
<dbReference type="PIR" id="AE1286">
    <property type="entry name" value="AE1286"/>
</dbReference>
<dbReference type="RefSeq" id="NP_465218.1">
    <property type="nucleotide sequence ID" value="NC_003210.1"/>
</dbReference>
<dbReference type="RefSeq" id="WP_003723881.1">
    <property type="nucleotide sequence ID" value="NZ_CP149495.1"/>
</dbReference>
<dbReference type="SMR" id="Q8Y6J1"/>
<dbReference type="STRING" id="169963.gene:17594374"/>
<dbReference type="PaxDb" id="169963-lmo1693"/>
<dbReference type="DNASU" id="985620"/>
<dbReference type="EnsemblBacteria" id="CAC99771">
    <property type="protein sequence ID" value="CAC99771"/>
    <property type="gene ID" value="CAC99771"/>
</dbReference>
<dbReference type="GeneID" id="985620"/>
<dbReference type="KEGG" id="lmo:lmo1693"/>
<dbReference type="PATRIC" id="fig|169963.11.peg.1736"/>
<dbReference type="eggNOG" id="COG2137">
    <property type="taxonomic scope" value="Bacteria"/>
</dbReference>
<dbReference type="HOGENOM" id="CLU_066607_4_0_9"/>
<dbReference type="OrthoDB" id="5421057at2"/>
<dbReference type="PhylomeDB" id="Q8Y6J1"/>
<dbReference type="BioCyc" id="LMON169963:LMO1693-MONOMER"/>
<dbReference type="Proteomes" id="UP000000817">
    <property type="component" value="Chromosome"/>
</dbReference>
<dbReference type="GO" id="GO:0005737">
    <property type="term" value="C:cytoplasm"/>
    <property type="evidence" value="ECO:0007669"/>
    <property type="project" value="UniProtKB-SubCell"/>
</dbReference>
<dbReference type="GO" id="GO:0006282">
    <property type="term" value="P:regulation of DNA repair"/>
    <property type="evidence" value="ECO:0007669"/>
    <property type="project" value="UniProtKB-UniRule"/>
</dbReference>
<dbReference type="Gene3D" id="1.10.10.10">
    <property type="entry name" value="Winged helix-like DNA-binding domain superfamily/Winged helix DNA-binding domain"/>
    <property type="match status" value="4"/>
</dbReference>
<dbReference type="HAMAP" id="MF_01114">
    <property type="entry name" value="RecX"/>
    <property type="match status" value="1"/>
</dbReference>
<dbReference type="InterPro" id="IPR053926">
    <property type="entry name" value="RecX_HTH_1st"/>
</dbReference>
<dbReference type="InterPro" id="IPR053924">
    <property type="entry name" value="RecX_HTH_2nd"/>
</dbReference>
<dbReference type="InterPro" id="IPR053925">
    <property type="entry name" value="RecX_HTH_3rd"/>
</dbReference>
<dbReference type="InterPro" id="IPR003783">
    <property type="entry name" value="Regulatory_RecX"/>
</dbReference>
<dbReference type="InterPro" id="IPR036388">
    <property type="entry name" value="WH-like_DNA-bd_sf"/>
</dbReference>
<dbReference type="NCBIfam" id="NF010733">
    <property type="entry name" value="PRK14135.1"/>
    <property type="match status" value="1"/>
</dbReference>
<dbReference type="PANTHER" id="PTHR33602">
    <property type="entry name" value="REGULATORY PROTEIN RECX FAMILY PROTEIN"/>
    <property type="match status" value="1"/>
</dbReference>
<dbReference type="PANTHER" id="PTHR33602:SF1">
    <property type="entry name" value="REGULATORY PROTEIN RECX FAMILY PROTEIN"/>
    <property type="match status" value="1"/>
</dbReference>
<dbReference type="Pfam" id="PF21982">
    <property type="entry name" value="RecX_HTH1"/>
    <property type="match status" value="1"/>
</dbReference>
<dbReference type="Pfam" id="PF02631">
    <property type="entry name" value="RecX_HTH2"/>
    <property type="match status" value="1"/>
</dbReference>
<dbReference type="Pfam" id="PF21981">
    <property type="entry name" value="RecX_HTH3"/>
    <property type="match status" value="1"/>
</dbReference>
<proteinExistence type="inferred from homology"/>